<proteinExistence type="inferred from homology"/>
<name>G6PI_ECOSM</name>
<reference key="1">
    <citation type="journal article" date="2008" name="J. Bacteriol.">
        <title>Insights into the environmental resistance gene pool from the genome sequence of the multidrug-resistant environmental isolate Escherichia coli SMS-3-5.</title>
        <authorList>
            <person name="Fricke W.F."/>
            <person name="Wright M.S."/>
            <person name="Lindell A.H."/>
            <person name="Harkins D.M."/>
            <person name="Baker-Austin C."/>
            <person name="Ravel J."/>
            <person name="Stepanauskas R."/>
        </authorList>
    </citation>
    <scope>NUCLEOTIDE SEQUENCE [LARGE SCALE GENOMIC DNA]</scope>
    <source>
        <strain>SMS-3-5 / SECEC</strain>
    </source>
</reference>
<protein>
    <recommendedName>
        <fullName evidence="1">Glucose-6-phosphate isomerase</fullName>
        <shortName evidence="1">GPI</shortName>
        <ecNumber evidence="1">5.3.1.9</ecNumber>
    </recommendedName>
    <alternativeName>
        <fullName evidence="1">Phosphoglucose isomerase</fullName>
        <shortName evidence="1">PGI</shortName>
    </alternativeName>
    <alternativeName>
        <fullName evidence="1">Phosphohexose isomerase</fullName>
        <shortName evidence="1">PHI</shortName>
    </alternativeName>
</protein>
<feature type="chain" id="PRO_1000125723" description="Glucose-6-phosphate isomerase">
    <location>
        <begin position="1"/>
        <end position="549"/>
    </location>
</feature>
<feature type="active site" description="Proton donor" evidence="1">
    <location>
        <position position="355"/>
    </location>
</feature>
<feature type="active site" evidence="1">
    <location>
        <position position="386"/>
    </location>
</feature>
<feature type="active site" evidence="1">
    <location>
        <position position="514"/>
    </location>
</feature>
<feature type="modified residue" description="N6-acetyllysine" evidence="1">
    <location>
        <position position="80"/>
    </location>
</feature>
<feature type="modified residue" description="N6-acetyllysine" evidence="1">
    <location>
        <position position="228"/>
    </location>
</feature>
<feature type="modified residue" description="N6-acetyllysine" evidence="1">
    <location>
        <position position="234"/>
    </location>
</feature>
<comment type="function">
    <text evidence="1">Catalyzes the reversible isomerization of glucose-6-phosphate to fructose-6-phosphate.</text>
</comment>
<comment type="catalytic activity">
    <reaction evidence="1">
        <text>alpha-D-glucose 6-phosphate = beta-D-fructose 6-phosphate</text>
        <dbReference type="Rhea" id="RHEA:11816"/>
        <dbReference type="ChEBI" id="CHEBI:57634"/>
        <dbReference type="ChEBI" id="CHEBI:58225"/>
        <dbReference type="EC" id="5.3.1.9"/>
    </reaction>
</comment>
<comment type="pathway">
    <text evidence="1">Carbohydrate biosynthesis; gluconeogenesis.</text>
</comment>
<comment type="pathway">
    <text evidence="1">Carbohydrate degradation; glycolysis; D-glyceraldehyde 3-phosphate and glycerone phosphate from D-glucose: step 2/4.</text>
</comment>
<comment type="subcellular location">
    <subcellularLocation>
        <location evidence="1">Cytoplasm</location>
    </subcellularLocation>
</comment>
<comment type="similarity">
    <text evidence="1">Belongs to the GPI family.</text>
</comment>
<sequence>MKNINPTQTAAWQALQKHFDEMKDVTIADLFAKDGDRFSKFSVTFDDQMLVDYSKNRITEETLAKLQDLAKECDLAGAIKSMFSGEKINRTENRAVLHVALRNRSNTPILVDGKDVMPEVNAVLEKMKTFSEAIISGEWKGYTGKAITDVVNIGIGGSDLGPYMVTEALRPYKNHLNMHFVSNVDGTHIAEVLKKVNPETTLFLVASKTFTTQETMTNAHSARDWFLKAAGDEKHVAKHFAALSTNAKAVGEFGIDTANMFEFWDWVGGRYSLWSAIGLSIVLSIGFDNFVELLSGAHAMDKHFSTTPAEKNLPVLLALIGIWYNNFFGAETEAILPYDQYMHRFAAYFQQGNMESNGKYVDRNGNVVDYQTGPIIWGEPGTNGQHAFYQLIHQGTKMVPCDFIAPAITHNPLSDHHQKLLSNFFAQTEALAFGKSREVVEQEYRDQGKDPATLDYVVPFKVFEGNRPTNSILLREITPFSLGALIALYEHKIFTQGVILNIFTFDQWGVELGKQLANRILPELKDDKEISSHDSSTNGLINRYKAWRG</sequence>
<accession>B1LPI9</accession>
<organism>
    <name type="scientific">Escherichia coli (strain SMS-3-5 / SECEC)</name>
    <dbReference type="NCBI Taxonomy" id="439855"/>
    <lineage>
        <taxon>Bacteria</taxon>
        <taxon>Pseudomonadati</taxon>
        <taxon>Pseudomonadota</taxon>
        <taxon>Gammaproteobacteria</taxon>
        <taxon>Enterobacterales</taxon>
        <taxon>Enterobacteriaceae</taxon>
        <taxon>Escherichia</taxon>
    </lineage>
</organism>
<evidence type="ECO:0000255" key="1">
    <source>
        <dbReference type="HAMAP-Rule" id="MF_00473"/>
    </source>
</evidence>
<keyword id="KW-0007">Acetylation</keyword>
<keyword id="KW-0963">Cytoplasm</keyword>
<keyword id="KW-0312">Gluconeogenesis</keyword>
<keyword id="KW-0324">Glycolysis</keyword>
<keyword id="KW-0413">Isomerase</keyword>
<gene>
    <name evidence="1" type="primary">pgi</name>
    <name type="ordered locus">EcSMS35_4486</name>
</gene>
<dbReference type="EC" id="5.3.1.9" evidence="1"/>
<dbReference type="EMBL" id="CP000970">
    <property type="protein sequence ID" value="ACB18320.1"/>
    <property type="molecule type" value="Genomic_DNA"/>
</dbReference>
<dbReference type="RefSeq" id="WP_000790015.1">
    <property type="nucleotide sequence ID" value="NC_010498.1"/>
</dbReference>
<dbReference type="SMR" id="B1LPI9"/>
<dbReference type="KEGG" id="ecm:EcSMS35_4486"/>
<dbReference type="HOGENOM" id="CLU_017947_3_1_6"/>
<dbReference type="UniPathway" id="UPA00109">
    <property type="reaction ID" value="UER00181"/>
</dbReference>
<dbReference type="UniPathway" id="UPA00138"/>
<dbReference type="Proteomes" id="UP000007011">
    <property type="component" value="Chromosome"/>
</dbReference>
<dbReference type="GO" id="GO:0005829">
    <property type="term" value="C:cytosol"/>
    <property type="evidence" value="ECO:0007669"/>
    <property type="project" value="TreeGrafter"/>
</dbReference>
<dbReference type="GO" id="GO:0097367">
    <property type="term" value="F:carbohydrate derivative binding"/>
    <property type="evidence" value="ECO:0007669"/>
    <property type="project" value="InterPro"/>
</dbReference>
<dbReference type="GO" id="GO:0004347">
    <property type="term" value="F:glucose-6-phosphate isomerase activity"/>
    <property type="evidence" value="ECO:0007669"/>
    <property type="project" value="UniProtKB-UniRule"/>
</dbReference>
<dbReference type="GO" id="GO:0048029">
    <property type="term" value="F:monosaccharide binding"/>
    <property type="evidence" value="ECO:0007669"/>
    <property type="project" value="TreeGrafter"/>
</dbReference>
<dbReference type="GO" id="GO:0006094">
    <property type="term" value="P:gluconeogenesis"/>
    <property type="evidence" value="ECO:0007669"/>
    <property type="project" value="UniProtKB-UniRule"/>
</dbReference>
<dbReference type="GO" id="GO:0051156">
    <property type="term" value="P:glucose 6-phosphate metabolic process"/>
    <property type="evidence" value="ECO:0007669"/>
    <property type="project" value="TreeGrafter"/>
</dbReference>
<dbReference type="GO" id="GO:0006096">
    <property type="term" value="P:glycolytic process"/>
    <property type="evidence" value="ECO:0007669"/>
    <property type="project" value="UniProtKB-UniRule"/>
</dbReference>
<dbReference type="CDD" id="cd05015">
    <property type="entry name" value="SIS_PGI_1"/>
    <property type="match status" value="1"/>
</dbReference>
<dbReference type="CDD" id="cd05016">
    <property type="entry name" value="SIS_PGI_2"/>
    <property type="match status" value="1"/>
</dbReference>
<dbReference type="FunFam" id="1.10.1390.10:FF:000001">
    <property type="entry name" value="Glucose-6-phosphate isomerase"/>
    <property type="match status" value="1"/>
</dbReference>
<dbReference type="FunFam" id="3.40.50.10490:FF:000004">
    <property type="entry name" value="Glucose-6-phosphate isomerase"/>
    <property type="match status" value="1"/>
</dbReference>
<dbReference type="Gene3D" id="1.10.1390.10">
    <property type="match status" value="1"/>
</dbReference>
<dbReference type="Gene3D" id="3.40.50.10490">
    <property type="entry name" value="Glucose-6-phosphate isomerase like protein, domain 1"/>
    <property type="match status" value="2"/>
</dbReference>
<dbReference type="HAMAP" id="MF_00473">
    <property type="entry name" value="G6P_isomerase"/>
    <property type="match status" value="1"/>
</dbReference>
<dbReference type="InterPro" id="IPR001672">
    <property type="entry name" value="G6P_Isomerase"/>
</dbReference>
<dbReference type="InterPro" id="IPR023096">
    <property type="entry name" value="G6P_Isomerase_C"/>
</dbReference>
<dbReference type="InterPro" id="IPR018189">
    <property type="entry name" value="Phosphoglucose_isomerase_CS"/>
</dbReference>
<dbReference type="InterPro" id="IPR046348">
    <property type="entry name" value="SIS_dom_sf"/>
</dbReference>
<dbReference type="InterPro" id="IPR035476">
    <property type="entry name" value="SIS_PGI_1"/>
</dbReference>
<dbReference type="InterPro" id="IPR035482">
    <property type="entry name" value="SIS_PGI_2"/>
</dbReference>
<dbReference type="NCBIfam" id="NF001211">
    <property type="entry name" value="PRK00179.1"/>
    <property type="match status" value="1"/>
</dbReference>
<dbReference type="PANTHER" id="PTHR11469">
    <property type="entry name" value="GLUCOSE-6-PHOSPHATE ISOMERASE"/>
    <property type="match status" value="1"/>
</dbReference>
<dbReference type="PANTHER" id="PTHR11469:SF1">
    <property type="entry name" value="GLUCOSE-6-PHOSPHATE ISOMERASE"/>
    <property type="match status" value="1"/>
</dbReference>
<dbReference type="Pfam" id="PF00342">
    <property type="entry name" value="PGI"/>
    <property type="match status" value="1"/>
</dbReference>
<dbReference type="PRINTS" id="PR00662">
    <property type="entry name" value="G6PISOMERASE"/>
</dbReference>
<dbReference type="SUPFAM" id="SSF53697">
    <property type="entry name" value="SIS domain"/>
    <property type="match status" value="1"/>
</dbReference>
<dbReference type="PROSITE" id="PS00765">
    <property type="entry name" value="P_GLUCOSE_ISOMERASE_1"/>
    <property type="match status" value="1"/>
</dbReference>
<dbReference type="PROSITE" id="PS00174">
    <property type="entry name" value="P_GLUCOSE_ISOMERASE_2"/>
    <property type="match status" value="1"/>
</dbReference>
<dbReference type="PROSITE" id="PS51463">
    <property type="entry name" value="P_GLUCOSE_ISOMERASE_3"/>
    <property type="match status" value="1"/>
</dbReference>